<accession>Q9JK53</accession>
<sequence length="378" mass="43293">MRASFFWLLPLLLILASVAQGQPTRPKPGIRRKPKPRPTPRFPQAPEPAEPTDLPPPLPPGPPSVFPDCPRECYCPPDFPSALYCDSRNLRRVPVIPPRIHYLYLQNNFITELPLESFQNATGLRWVNLDNNRIRKVDQRVLGKLPSLAFLYMEKNQLEEVPSALPRNLEQLRLSQNLISRIPPGVFSKLENLLLLDLQHNRLSDGVFKADTFQGLKNLMQLNLAHNILRKMPPKVPQAIHQLYLDSNKIETIPNGYFKDFPNLAFIRMNYNKLSDRGLPKNSFNISNLLVLHLSHNKISNVPAISNKLEHLYLNNNSIEKINGTQICPNNLVAFHDFSSDLENVPHLRYLRLDGNFLKPPIPLDLMMCFRLLQSVVI</sequence>
<name>PRELP_MOUSE</name>
<gene>
    <name type="primary">Prelp</name>
</gene>
<evidence type="ECO:0000250" key="1"/>
<evidence type="ECO:0000250" key="2">
    <source>
        <dbReference type="UniProtKB" id="P51888"/>
    </source>
</evidence>
<evidence type="ECO:0000250" key="3">
    <source>
        <dbReference type="UniProtKB" id="Q9GKN8"/>
    </source>
</evidence>
<evidence type="ECO:0000255" key="4"/>
<evidence type="ECO:0000256" key="5">
    <source>
        <dbReference type="SAM" id="MobiDB-lite"/>
    </source>
</evidence>
<evidence type="ECO:0000305" key="6"/>
<feature type="signal peptide" evidence="4">
    <location>
        <begin position="1"/>
        <end position="21"/>
    </location>
</feature>
<feature type="chain" id="PRO_0000032745" description="Prolargin">
    <location>
        <begin position="22"/>
        <end position="378"/>
    </location>
</feature>
<feature type="repeat" description="LRR 1">
    <location>
        <begin position="91"/>
        <end position="110"/>
    </location>
</feature>
<feature type="repeat" description="LRR 2">
    <location>
        <begin position="111"/>
        <end position="134"/>
    </location>
</feature>
<feature type="repeat" description="LRR 3">
    <location>
        <begin position="135"/>
        <end position="158"/>
    </location>
</feature>
<feature type="repeat" description="LRR 4">
    <location>
        <begin position="159"/>
        <end position="179"/>
    </location>
</feature>
<feature type="repeat" description="LRR 5">
    <location>
        <begin position="180"/>
        <end position="203"/>
    </location>
</feature>
<feature type="repeat" description="LRR 6">
    <location>
        <begin position="204"/>
        <end position="229"/>
    </location>
</feature>
<feature type="repeat" description="LRR 7">
    <location>
        <begin position="230"/>
        <end position="250"/>
    </location>
</feature>
<feature type="repeat" description="LRR 8">
    <location>
        <begin position="251"/>
        <end position="274"/>
    </location>
</feature>
<feature type="repeat" description="LRR 9">
    <location>
        <begin position="275"/>
        <end position="299"/>
    </location>
</feature>
<feature type="repeat" description="LRR 10">
    <location>
        <begin position="300"/>
        <end position="319"/>
    </location>
</feature>
<feature type="repeat" description="LRR 11">
    <location>
        <begin position="320"/>
        <end position="358"/>
    </location>
</feature>
<feature type="repeat" description="LRR 12">
    <location>
        <begin position="359"/>
        <end position="378"/>
    </location>
</feature>
<feature type="region of interest" description="Disordered" evidence="5">
    <location>
        <begin position="22"/>
        <end position="62"/>
    </location>
</feature>
<feature type="compositionally biased region" description="Basic residues" evidence="5">
    <location>
        <begin position="28"/>
        <end position="38"/>
    </location>
</feature>
<feature type="compositionally biased region" description="Pro residues" evidence="5">
    <location>
        <begin position="39"/>
        <end position="62"/>
    </location>
</feature>
<feature type="glycosylation site" description="N-linked (GlcNAc...) asparagine" evidence="4">
    <location>
        <position position="120"/>
    </location>
</feature>
<feature type="glycosylation site" description="N-linked (GlcNAc...) asparagine" evidence="4">
    <location>
        <position position="285"/>
    </location>
</feature>
<feature type="glycosylation site" description="N-linked (GlcNAc...) asparagine" evidence="4">
    <location>
        <position position="316"/>
    </location>
</feature>
<feature type="glycosylation site" description="N-linked (GlcNAc...) asparagine" evidence="4">
    <location>
        <position position="323"/>
    </location>
</feature>
<feature type="disulfide bond" evidence="1">
    <location>
        <begin position="328"/>
        <end position="369"/>
    </location>
</feature>
<reference key="1">
    <citation type="journal article" date="2001" name="Matrix Biol.">
        <title>Characterization and expression of murine PRELP.</title>
        <authorList>
            <person name="Grover J."/>
            <person name="Roughley P.J."/>
        </authorList>
    </citation>
    <scope>NUCLEOTIDE SEQUENCE [GENOMIC DNA]</scope>
</reference>
<reference key="2">
    <citation type="journal article" date="2004" name="Genome Res.">
        <title>The status, quality, and expansion of the NIH full-length cDNA project: the Mammalian Gene Collection (MGC).</title>
        <authorList>
            <consortium name="The MGC Project Team"/>
        </authorList>
    </citation>
    <scope>NUCLEOTIDE SEQUENCE [LARGE SCALE MRNA]</scope>
    <source>
        <tissue>Salivary gland</tissue>
    </source>
</reference>
<reference key="3">
    <citation type="journal article" date="2006" name="Mol. Cell. Proteomics">
        <title>Comprehensive identification of phosphorylation sites in postsynaptic density preparations.</title>
        <authorList>
            <person name="Trinidad J.C."/>
            <person name="Specht C.G."/>
            <person name="Thalhammer A."/>
            <person name="Schoepfer R."/>
            <person name="Burlingame A.L."/>
        </authorList>
    </citation>
    <scope>IDENTIFICATION BY MASS SPECTROMETRY [LARGE SCALE ANALYSIS]</scope>
    <source>
        <tissue>Brain</tissue>
    </source>
</reference>
<reference key="4">
    <citation type="journal article" date="2010" name="Cell">
        <title>A tissue-specific atlas of mouse protein phosphorylation and expression.</title>
        <authorList>
            <person name="Huttlin E.L."/>
            <person name="Jedrychowski M.P."/>
            <person name="Elias J.E."/>
            <person name="Goswami T."/>
            <person name="Rad R."/>
            <person name="Beausoleil S.A."/>
            <person name="Villen J."/>
            <person name="Haas W."/>
            <person name="Sowa M.E."/>
            <person name="Gygi S.P."/>
        </authorList>
    </citation>
    <scope>IDENTIFICATION BY MASS SPECTROMETRY [LARGE SCALE ANALYSIS]</scope>
    <source>
        <tissue>Brown adipose tissue</tissue>
        <tissue>Lung</tissue>
        <tissue>Spleen</tissue>
        <tissue>Testis</tissue>
    </source>
</reference>
<keyword id="KW-1015">Disulfide bond</keyword>
<keyword id="KW-0272">Extracellular matrix</keyword>
<keyword id="KW-0325">Glycoprotein</keyword>
<keyword id="KW-0357">Heparan sulfate</keyword>
<keyword id="KW-0358">Heparin-binding</keyword>
<keyword id="KW-0433">Leucine-rich repeat</keyword>
<keyword id="KW-0654">Proteoglycan</keyword>
<keyword id="KW-1185">Reference proteome</keyword>
<keyword id="KW-0677">Repeat</keyword>
<keyword id="KW-0964">Secreted</keyword>
<keyword id="KW-0732">Signal</keyword>
<proteinExistence type="evidence at protein level"/>
<comment type="function">
    <text evidence="3">May anchor basement membranes to the underlying connective tissue.</text>
</comment>
<comment type="subunit">
    <text evidence="3">Binds the basement membrane heparan sulfate proteoglycan perlecan and triple helical collagens type I and type II.</text>
</comment>
<comment type="subcellular location">
    <subcellularLocation>
        <location>Secreted</location>
        <location>Extracellular space</location>
        <location>Extracellular matrix</location>
    </subcellularLocation>
</comment>
<comment type="tissue specificity">
    <text>Expressed in cartilage throughout both fetal development and postnatal life. It is also expressed in the developing embryo prior to skeletogenesis. In adult, highest expression in lung, lower levels in cardiac and skeletal muscle.</text>
</comment>
<comment type="domain">
    <text evidence="2 3">The basic N-terminal Arg/Pro-rich binds heparin and heparan sulfate. Binds collagens type I and type II through its leucine-rich repeat domain.</text>
</comment>
<comment type="PTM">
    <text evidence="3">Glycosylated; contains heparan sulfate.</text>
</comment>
<comment type="similarity">
    <text evidence="6">Belongs to the small leucine-rich proteoglycan (SLRP) family. SLRP class II subfamily.</text>
</comment>
<organism>
    <name type="scientific">Mus musculus</name>
    <name type="common">Mouse</name>
    <dbReference type="NCBI Taxonomy" id="10090"/>
    <lineage>
        <taxon>Eukaryota</taxon>
        <taxon>Metazoa</taxon>
        <taxon>Chordata</taxon>
        <taxon>Craniata</taxon>
        <taxon>Vertebrata</taxon>
        <taxon>Euteleostomi</taxon>
        <taxon>Mammalia</taxon>
        <taxon>Eutheria</taxon>
        <taxon>Euarchontoglires</taxon>
        <taxon>Glires</taxon>
        <taxon>Rodentia</taxon>
        <taxon>Myomorpha</taxon>
        <taxon>Muroidea</taxon>
        <taxon>Muridae</taxon>
        <taxon>Murinae</taxon>
        <taxon>Mus</taxon>
        <taxon>Mus</taxon>
    </lineage>
</organism>
<protein>
    <recommendedName>
        <fullName>Prolargin</fullName>
    </recommendedName>
    <alternativeName>
        <fullName>Proline-arginine-rich end leucine-rich repeat protein</fullName>
    </alternativeName>
</protein>
<dbReference type="EMBL" id="AF261888">
    <property type="protein sequence ID" value="AAF72994.2"/>
    <property type="molecule type" value="Genomic_DNA"/>
</dbReference>
<dbReference type="EMBL" id="AF261887">
    <property type="protein sequence ID" value="AAF72994.2"/>
    <property type="status" value="JOINED"/>
    <property type="molecule type" value="Genomic_DNA"/>
</dbReference>
<dbReference type="EMBL" id="BC019775">
    <property type="protein sequence ID" value="AAH19775.1"/>
    <property type="molecule type" value="mRNA"/>
</dbReference>
<dbReference type="CCDS" id="CCDS15300.1"/>
<dbReference type="RefSeq" id="NP_473418.3">
    <property type="nucleotide sequence ID" value="NM_054077.4"/>
</dbReference>
<dbReference type="RefSeq" id="XP_006529147.1">
    <property type="nucleotide sequence ID" value="XM_006529084.5"/>
</dbReference>
<dbReference type="RefSeq" id="XP_006529148.1">
    <property type="nucleotide sequence ID" value="XM_006529085.3"/>
</dbReference>
<dbReference type="SMR" id="Q9JK53"/>
<dbReference type="BioGRID" id="228027">
    <property type="interactions" value="1"/>
</dbReference>
<dbReference type="FunCoup" id="Q9JK53">
    <property type="interactions" value="172"/>
</dbReference>
<dbReference type="STRING" id="10090.ENSMUSP00000048803"/>
<dbReference type="GlyCosmos" id="Q9JK53">
    <property type="glycosylation" value="4 sites, No reported glycans"/>
</dbReference>
<dbReference type="GlyGen" id="Q9JK53">
    <property type="glycosylation" value="5 sites, 2 N-linked glycans (2 sites), 1 O-linked glycan (1 site)"/>
</dbReference>
<dbReference type="PhosphoSitePlus" id="Q9JK53"/>
<dbReference type="SwissPalm" id="Q9JK53"/>
<dbReference type="jPOST" id="Q9JK53"/>
<dbReference type="PaxDb" id="10090-ENSMUSP00000048803"/>
<dbReference type="ProteomicsDB" id="291791"/>
<dbReference type="Antibodypedia" id="34545">
    <property type="antibodies" value="151 antibodies from 24 providers"/>
</dbReference>
<dbReference type="DNASU" id="116847"/>
<dbReference type="Ensembl" id="ENSMUST00000048432.6">
    <property type="protein sequence ID" value="ENSMUSP00000048803.6"/>
    <property type="gene ID" value="ENSMUSG00000041577.6"/>
</dbReference>
<dbReference type="GeneID" id="116847"/>
<dbReference type="KEGG" id="mmu:116847"/>
<dbReference type="UCSC" id="uc007crc.3">
    <property type="organism name" value="mouse"/>
</dbReference>
<dbReference type="AGR" id="MGI:2151110"/>
<dbReference type="CTD" id="5549"/>
<dbReference type="MGI" id="MGI:2151110">
    <property type="gene designation" value="Prelp"/>
</dbReference>
<dbReference type="VEuPathDB" id="HostDB:ENSMUSG00000041577"/>
<dbReference type="eggNOG" id="KOG0619">
    <property type="taxonomic scope" value="Eukaryota"/>
</dbReference>
<dbReference type="GeneTree" id="ENSGT00940000160163"/>
<dbReference type="HOGENOM" id="CLU_000288_186_4_1"/>
<dbReference type="InParanoid" id="Q9JK53"/>
<dbReference type="OMA" id="ELRWVNL"/>
<dbReference type="OrthoDB" id="5789657at2759"/>
<dbReference type="PhylomeDB" id="Q9JK53"/>
<dbReference type="TreeFam" id="TF334562"/>
<dbReference type="Reactome" id="R-MMU-2022854">
    <property type="pathway name" value="Keratan sulfate biosynthesis"/>
</dbReference>
<dbReference type="Reactome" id="R-MMU-2022857">
    <property type="pathway name" value="Keratan sulfate degradation"/>
</dbReference>
<dbReference type="BioGRID-ORCS" id="116847">
    <property type="hits" value="7 hits in 77 CRISPR screens"/>
</dbReference>
<dbReference type="ChiTaRS" id="Prelp">
    <property type="organism name" value="mouse"/>
</dbReference>
<dbReference type="PRO" id="PR:Q9JK53"/>
<dbReference type="Proteomes" id="UP000000589">
    <property type="component" value="Chromosome 1"/>
</dbReference>
<dbReference type="RNAct" id="Q9JK53">
    <property type="molecule type" value="protein"/>
</dbReference>
<dbReference type="Bgee" id="ENSMUSG00000041577">
    <property type="expression patterns" value="Expressed in humerus cartilage element and 190 other cell types or tissues"/>
</dbReference>
<dbReference type="ExpressionAtlas" id="Q9JK53">
    <property type="expression patterns" value="baseline and differential"/>
</dbReference>
<dbReference type="GO" id="GO:0062023">
    <property type="term" value="C:collagen-containing extracellular matrix"/>
    <property type="evidence" value="ECO:0007005"/>
    <property type="project" value="BHF-UCL"/>
</dbReference>
<dbReference type="GO" id="GO:0005576">
    <property type="term" value="C:extracellular region"/>
    <property type="evidence" value="ECO:0007669"/>
    <property type="project" value="UniProtKB-KW"/>
</dbReference>
<dbReference type="GO" id="GO:0008201">
    <property type="term" value="F:heparin binding"/>
    <property type="evidence" value="ECO:0007669"/>
    <property type="project" value="UniProtKB-KW"/>
</dbReference>
<dbReference type="GO" id="GO:0090398">
    <property type="term" value="P:cellular senescence"/>
    <property type="evidence" value="ECO:0000314"/>
    <property type="project" value="MGI"/>
</dbReference>
<dbReference type="FunFam" id="3.80.10.10:FF:000092">
    <property type="entry name" value="keratocan isoform X1"/>
    <property type="match status" value="1"/>
</dbReference>
<dbReference type="FunFam" id="3.80.10.10:FF:000133">
    <property type="entry name" value="prolargin"/>
    <property type="match status" value="1"/>
</dbReference>
<dbReference type="Gene3D" id="3.80.10.10">
    <property type="entry name" value="Ribonuclease Inhibitor"/>
    <property type="match status" value="2"/>
</dbReference>
<dbReference type="InterPro" id="IPR001611">
    <property type="entry name" value="Leu-rich_rpt"/>
</dbReference>
<dbReference type="InterPro" id="IPR003591">
    <property type="entry name" value="Leu-rich_rpt_typical-subtyp"/>
</dbReference>
<dbReference type="InterPro" id="IPR032675">
    <property type="entry name" value="LRR_dom_sf"/>
</dbReference>
<dbReference type="InterPro" id="IPR000372">
    <property type="entry name" value="LRRNT"/>
</dbReference>
<dbReference type="InterPro" id="IPR050333">
    <property type="entry name" value="SLRP"/>
</dbReference>
<dbReference type="PANTHER" id="PTHR45712">
    <property type="entry name" value="AGAP008170-PA"/>
    <property type="match status" value="1"/>
</dbReference>
<dbReference type="PANTHER" id="PTHR45712:SF8">
    <property type="entry name" value="PROLARGIN"/>
    <property type="match status" value="1"/>
</dbReference>
<dbReference type="Pfam" id="PF13855">
    <property type="entry name" value="LRR_8"/>
    <property type="match status" value="2"/>
</dbReference>
<dbReference type="SMART" id="SM00364">
    <property type="entry name" value="LRR_BAC"/>
    <property type="match status" value="5"/>
</dbReference>
<dbReference type="SMART" id="SM00369">
    <property type="entry name" value="LRR_TYP"/>
    <property type="match status" value="8"/>
</dbReference>
<dbReference type="SMART" id="SM00013">
    <property type="entry name" value="LRRNT"/>
    <property type="match status" value="1"/>
</dbReference>
<dbReference type="SUPFAM" id="SSF52058">
    <property type="entry name" value="L domain-like"/>
    <property type="match status" value="1"/>
</dbReference>
<dbReference type="PROSITE" id="PS51450">
    <property type="entry name" value="LRR"/>
    <property type="match status" value="10"/>
</dbReference>